<comment type="function">
    <text evidence="1">Regulates HCFC1 activity by modulating its subcellular localization. Overexpression of HCFC1R1 leads to accumulation of HCFC1 in the cytoplasm. HCFC1R1-mediated export may provide the pool of cytoplasmic HCFC1 required for import of virion-derived VP16 into the nucleus.</text>
</comment>
<comment type="subunit">
    <text evidence="1">Interacts with HCFC1.</text>
</comment>
<comment type="subcellular location">
    <subcellularLocation>
        <location evidence="1">Cytoplasm</location>
    </subcellularLocation>
    <subcellularLocation>
        <location evidence="1">Nucleus</location>
    </subcellularLocation>
    <text>Shuttles between the nucleus and cytoplasm in a CRM1-dependent manner.</text>
</comment>
<comment type="alternative products">
    <event type="alternative splicing"/>
    <isoform>
        <id>Q9NWW0-1</id>
        <name>1</name>
        <sequence type="displayed"/>
    </isoform>
    <isoform>
        <id>Q9NWW0-2</id>
        <name>2</name>
        <sequence type="described" ref="VSP_034082"/>
    </isoform>
</comment>
<comment type="tissue specificity">
    <text evidence="1">Widely expressed.</text>
</comment>
<keyword id="KW-0025">Alternative splicing</keyword>
<keyword id="KW-0963">Cytoplasm</keyword>
<keyword id="KW-0539">Nucleus</keyword>
<keyword id="KW-1267">Proteomics identification</keyword>
<keyword id="KW-1185">Reference proteome</keyword>
<evidence type="ECO:0000269" key="1">
    <source>
    </source>
</evidence>
<evidence type="ECO:0000269" key="2">
    <source>
    </source>
</evidence>
<evidence type="ECO:0000303" key="3">
    <source>
    </source>
</evidence>
<evidence type="ECO:0000303" key="4">
    <source>
    </source>
</evidence>
<organism>
    <name type="scientific">Homo sapiens</name>
    <name type="common">Human</name>
    <dbReference type="NCBI Taxonomy" id="9606"/>
    <lineage>
        <taxon>Eukaryota</taxon>
        <taxon>Metazoa</taxon>
        <taxon>Chordata</taxon>
        <taxon>Craniata</taxon>
        <taxon>Vertebrata</taxon>
        <taxon>Euteleostomi</taxon>
        <taxon>Mammalia</taxon>
        <taxon>Eutheria</taxon>
        <taxon>Euarchontoglires</taxon>
        <taxon>Primates</taxon>
        <taxon>Haplorrhini</taxon>
        <taxon>Catarrhini</taxon>
        <taxon>Hominidae</taxon>
        <taxon>Homo</taxon>
    </lineage>
</organism>
<proteinExistence type="evidence at protein level"/>
<sequence length="138" mass="15291">MILQQPLQRGPQGGAQRLPRAALGVTWGLDASSPLRGAVPMSTKRRLEEEQEPLRKQFLSEENMATHFSQLSLHNDHPYCSPPMTFSPALPPLRSPCSELLLWRYPGSLIPEALRLLRLGDTPSPPYPATPAGDIMEL</sequence>
<feature type="chain" id="PRO_0000338978" description="Host cell factor C1 regulator 1">
    <location>
        <begin position="1"/>
        <end position="138"/>
    </location>
</feature>
<feature type="region of interest" description="Interaction with HCFC1" evidence="1">
    <location>
        <begin position="76"/>
        <end position="79"/>
    </location>
</feature>
<feature type="short sequence motif" description="Nuclear export signal">
    <location>
        <begin position="110"/>
        <end position="119"/>
    </location>
</feature>
<feature type="splice variant" id="VSP_034082" description="In isoform 2." evidence="3 4">
    <original>SSPLRGAVPMSTKRRLEEEQ</original>
    <variation>R</variation>
    <location>
        <begin position="32"/>
        <end position="51"/>
    </location>
</feature>
<feature type="sequence variant" id="VAR_043849" description="In dbSNP:rs10508." evidence="2">
    <original>P</original>
    <variation>Q</variation>
    <location>
        <position position="92"/>
    </location>
</feature>
<feature type="mutagenesis site" description="Loss of interaction with HCFC1." evidence="1">
    <original>DHPY</original>
    <variation>AAPA</variation>
    <location>
        <begin position="76"/>
        <end position="79"/>
    </location>
</feature>
<feature type="mutagenesis site" description="Reduces nuclear export." evidence="1">
    <original>LRL</original>
    <variation>ARA</variation>
    <location>
        <begin position="117"/>
        <end position="119"/>
    </location>
</feature>
<reference key="1">
    <citation type="journal article" date="2002" name="J. Biol. Chem.">
        <title>Interaction of HCF-1 with a cellular nuclear export factor.</title>
        <authorList>
            <person name="Mahajan S.S."/>
            <person name="Little M.M."/>
            <person name="Vazquez R."/>
            <person name="Wilson A.C."/>
        </authorList>
    </citation>
    <scope>NUCLEOTIDE SEQUENCE [MRNA] (ISOFORMS 1 AND 2)</scope>
    <scope>FUNCTION</scope>
    <scope>SUBCELLULAR LOCATION</scope>
    <scope>TISSUE SPECIFICITY</scope>
    <scope>MUTAGENESIS OF 76-ASP--TYR-79 AND 117-LEU--LEU-119</scope>
    <scope>INTERACTION WITH HCFC1</scope>
    <source>
        <tissue>Brain</tissue>
    </source>
</reference>
<reference key="2">
    <citation type="journal article" date="2004" name="Nat. Genet.">
        <title>Complete sequencing and characterization of 21,243 full-length human cDNAs.</title>
        <authorList>
            <person name="Ota T."/>
            <person name="Suzuki Y."/>
            <person name="Nishikawa T."/>
            <person name="Otsuki T."/>
            <person name="Sugiyama T."/>
            <person name="Irie R."/>
            <person name="Wakamatsu A."/>
            <person name="Hayashi K."/>
            <person name="Sato H."/>
            <person name="Nagai K."/>
            <person name="Kimura K."/>
            <person name="Makita H."/>
            <person name="Sekine M."/>
            <person name="Obayashi M."/>
            <person name="Nishi T."/>
            <person name="Shibahara T."/>
            <person name="Tanaka T."/>
            <person name="Ishii S."/>
            <person name="Yamamoto J."/>
            <person name="Saito K."/>
            <person name="Kawai Y."/>
            <person name="Isono Y."/>
            <person name="Nakamura Y."/>
            <person name="Nagahari K."/>
            <person name="Murakami K."/>
            <person name="Yasuda T."/>
            <person name="Iwayanagi T."/>
            <person name="Wagatsuma M."/>
            <person name="Shiratori A."/>
            <person name="Sudo H."/>
            <person name="Hosoiri T."/>
            <person name="Kaku Y."/>
            <person name="Kodaira H."/>
            <person name="Kondo H."/>
            <person name="Sugawara M."/>
            <person name="Takahashi M."/>
            <person name="Kanda K."/>
            <person name="Yokoi T."/>
            <person name="Furuya T."/>
            <person name="Kikkawa E."/>
            <person name="Omura Y."/>
            <person name="Abe K."/>
            <person name="Kamihara K."/>
            <person name="Katsuta N."/>
            <person name="Sato K."/>
            <person name="Tanikawa M."/>
            <person name="Yamazaki M."/>
            <person name="Ninomiya K."/>
            <person name="Ishibashi T."/>
            <person name="Yamashita H."/>
            <person name="Murakawa K."/>
            <person name="Fujimori K."/>
            <person name="Tanai H."/>
            <person name="Kimata M."/>
            <person name="Watanabe M."/>
            <person name="Hiraoka S."/>
            <person name="Chiba Y."/>
            <person name="Ishida S."/>
            <person name="Ono Y."/>
            <person name="Takiguchi S."/>
            <person name="Watanabe S."/>
            <person name="Yosida M."/>
            <person name="Hotuta T."/>
            <person name="Kusano J."/>
            <person name="Kanehori K."/>
            <person name="Takahashi-Fujii A."/>
            <person name="Hara H."/>
            <person name="Tanase T.-O."/>
            <person name="Nomura Y."/>
            <person name="Togiya S."/>
            <person name="Komai F."/>
            <person name="Hara R."/>
            <person name="Takeuchi K."/>
            <person name="Arita M."/>
            <person name="Imose N."/>
            <person name="Musashino K."/>
            <person name="Yuuki H."/>
            <person name="Oshima A."/>
            <person name="Sasaki N."/>
            <person name="Aotsuka S."/>
            <person name="Yoshikawa Y."/>
            <person name="Matsunawa H."/>
            <person name="Ichihara T."/>
            <person name="Shiohata N."/>
            <person name="Sano S."/>
            <person name="Moriya S."/>
            <person name="Momiyama H."/>
            <person name="Satoh N."/>
            <person name="Takami S."/>
            <person name="Terashima Y."/>
            <person name="Suzuki O."/>
            <person name="Nakagawa S."/>
            <person name="Senoh A."/>
            <person name="Mizoguchi H."/>
            <person name="Goto Y."/>
            <person name="Shimizu F."/>
            <person name="Wakebe H."/>
            <person name="Hishigaki H."/>
            <person name="Watanabe T."/>
            <person name="Sugiyama A."/>
            <person name="Takemoto M."/>
            <person name="Kawakami B."/>
            <person name="Yamazaki M."/>
            <person name="Watanabe K."/>
            <person name="Kumagai A."/>
            <person name="Itakura S."/>
            <person name="Fukuzumi Y."/>
            <person name="Fujimori Y."/>
            <person name="Komiyama M."/>
            <person name="Tashiro H."/>
            <person name="Tanigami A."/>
            <person name="Fujiwara T."/>
            <person name="Ono T."/>
            <person name="Yamada K."/>
            <person name="Fujii Y."/>
            <person name="Ozaki K."/>
            <person name="Hirao M."/>
            <person name="Ohmori Y."/>
            <person name="Kawabata A."/>
            <person name="Hikiji T."/>
            <person name="Kobatake N."/>
            <person name="Inagaki H."/>
            <person name="Ikema Y."/>
            <person name="Okamoto S."/>
            <person name="Okitani R."/>
            <person name="Kawakami T."/>
            <person name="Noguchi S."/>
            <person name="Itoh T."/>
            <person name="Shigeta K."/>
            <person name="Senba T."/>
            <person name="Matsumura K."/>
            <person name="Nakajima Y."/>
            <person name="Mizuno T."/>
            <person name="Morinaga M."/>
            <person name="Sasaki M."/>
            <person name="Togashi T."/>
            <person name="Oyama M."/>
            <person name="Hata H."/>
            <person name="Watanabe M."/>
            <person name="Komatsu T."/>
            <person name="Mizushima-Sugano J."/>
            <person name="Satoh T."/>
            <person name="Shirai Y."/>
            <person name="Takahashi Y."/>
            <person name="Nakagawa K."/>
            <person name="Okumura K."/>
            <person name="Nagase T."/>
            <person name="Nomura N."/>
            <person name="Kikuchi H."/>
            <person name="Masuho Y."/>
            <person name="Yamashita R."/>
            <person name="Nakai K."/>
            <person name="Yada T."/>
            <person name="Nakamura Y."/>
            <person name="Ohara O."/>
            <person name="Isogai T."/>
            <person name="Sugano S."/>
        </authorList>
    </citation>
    <scope>NUCLEOTIDE SEQUENCE [LARGE SCALE MRNA] (ISOFORM 1)</scope>
</reference>
<reference key="3">
    <citation type="submission" date="2004-06" db="EMBL/GenBank/DDBJ databases">
        <title>Cloning of human full open reading frames in Gateway(TM) system entry vector (pDONR201).</title>
        <authorList>
            <person name="Ebert L."/>
            <person name="Schick M."/>
            <person name="Neubert P."/>
            <person name="Schatten R."/>
            <person name="Henze S."/>
            <person name="Korn B."/>
        </authorList>
    </citation>
    <scope>NUCLEOTIDE SEQUENCE [LARGE SCALE MRNA] (ISOFORM 1)</scope>
</reference>
<reference key="4">
    <citation type="submission" date="2005-09" db="EMBL/GenBank/DDBJ databases">
        <authorList>
            <person name="Mural R.J."/>
            <person name="Istrail S."/>
            <person name="Sutton G.G."/>
            <person name="Florea L."/>
            <person name="Halpern A.L."/>
            <person name="Mobarry C.M."/>
            <person name="Lippert R."/>
            <person name="Walenz B."/>
            <person name="Shatkay H."/>
            <person name="Dew I."/>
            <person name="Miller J.R."/>
            <person name="Flanigan M.J."/>
            <person name="Edwards N.J."/>
            <person name="Bolanos R."/>
            <person name="Fasulo D."/>
            <person name="Halldorsson B.V."/>
            <person name="Hannenhalli S."/>
            <person name="Turner R."/>
            <person name="Yooseph S."/>
            <person name="Lu F."/>
            <person name="Nusskern D.R."/>
            <person name="Shue B.C."/>
            <person name="Zheng X.H."/>
            <person name="Zhong F."/>
            <person name="Delcher A.L."/>
            <person name="Huson D.H."/>
            <person name="Kravitz S.A."/>
            <person name="Mouchard L."/>
            <person name="Reinert K."/>
            <person name="Remington K.A."/>
            <person name="Clark A.G."/>
            <person name="Waterman M.S."/>
            <person name="Eichler E.E."/>
            <person name="Adams M.D."/>
            <person name="Hunkapiller M.W."/>
            <person name="Myers E.W."/>
            <person name="Venter J.C."/>
        </authorList>
    </citation>
    <scope>NUCLEOTIDE SEQUENCE [LARGE SCALE GENOMIC DNA]</scope>
</reference>
<reference key="5">
    <citation type="journal article" date="2004" name="Genome Res.">
        <title>The status, quality, and expansion of the NIH full-length cDNA project: the Mammalian Gene Collection (MGC).</title>
        <authorList>
            <consortium name="The MGC Project Team"/>
        </authorList>
    </citation>
    <scope>NUCLEOTIDE SEQUENCE [LARGE SCALE MRNA] (ISOFORMS 1 AND 2)</scope>
    <scope>VARIANT GLN-92</scope>
    <source>
        <tissue>Mammary gland</tissue>
        <tissue>PNS</tissue>
    </source>
</reference>
<reference key="6">
    <citation type="journal article" date="2012" name="Proc. Natl. Acad. Sci. U.S.A.">
        <title>N-terminal acetylome analyses and functional insights of the N-terminal acetyltransferase NatB.</title>
        <authorList>
            <person name="Van Damme P."/>
            <person name="Lasa M."/>
            <person name="Polevoda B."/>
            <person name="Gazquez C."/>
            <person name="Elosegui-Artola A."/>
            <person name="Kim D.S."/>
            <person name="De Juan-Pardo E."/>
            <person name="Demeyer K."/>
            <person name="Hole K."/>
            <person name="Larrea E."/>
            <person name="Timmerman E."/>
            <person name="Prieto J."/>
            <person name="Arnesen T."/>
            <person name="Sherman F."/>
            <person name="Gevaert K."/>
            <person name="Aldabe R."/>
        </authorList>
    </citation>
    <scope>IDENTIFICATION BY MASS SPECTROMETRY [LARGE SCALE ANALYSIS]</scope>
</reference>
<gene>
    <name type="primary">HCFC1R1</name>
    <name type="synonym">HPIP</name>
</gene>
<name>HPIP_HUMAN</name>
<accession>Q9NWW0</accession>
<accession>D3DUA7</accession>
<accession>Q68EN7</accession>
<protein>
    <recommendedName>
        <fullName>Host cell factor C1 regulator 1</fullName>
    </recommendedName>
    <alternativeName>
        <fullName>HCF-1 beta-propeller-interacting protein</fullName>
    </alternativeName>
</protein>
<dbReference type="EMBL" id="AY116892">
    <property type="protein sequence ID" value="AAM49798.1"/>
    <property type="molecule type" value="mRNA"/>
</dbReference>
<dbReference type="EMBL" id="AK000575">
    <property type="protein sequence ID" value="BAA91265.1"/>
    <property type="molecule type" value="mRNA"/>
</dbReference>
<dbReference type="EMBL" id="CR457245">
    <property type="protein sequence ID" value="CAG33526.1"/>
    <property type="molecule type" value="mRNA"/>
</dbReference>
<dbReference type="EMBL" id="CH471112">
    <property type="protein sequence ID" value="EAW85425.1"/>
    <property type="molecule type" value="Genomic_DNA"/>
</dbReference>
<dbReference type="EMBL" id="CH471112">
    <property type="protein sequence ID" value="EAW85426.1"/>
    <property type="molecule type" value="Genomic_DNA"/>
</dbReference>
<dbReference type="EMBL" id="BC064026">
    <property type="protein sequence ID" value="AAH64026.1"/>
    <property type="molecule type" value="mRNA"/>
</dbReference>
<dbReference type="EMBL" id="BC080178">
    <property type="protein sequence ID" value="AAH80178.1"/>
    <property type="molecule type" value="mRNA"/>
</dbReference>
<dbReference type="CCDS" id="CCDS10490.1">
    <molecule id="Q9NWW0-1"/>
</dbReference>
<dbReference type="CCDS" id="CCDS32375.1">
    <molecule id="Q9NWW0-2"/>
</dbReference>
<dbReference type="RefSeq" id="NP_001002017.1">
    <molecule id="Q9NWW0-2"/>
    <property type="nucleotide sequence ID" value="NM_001002017.2"/>
</dbReference>
<dbReference type="RefSeq" id="NP_001002018.1">
    <molecule id="Q9NWW0-1"/>
    <property type="nucleotide sequence ID" value="NM_001002018.2"/>
</dbReference>
<dbReference type="RefSeq" id="NP_001275594.1">
    <molecule id="Q9NWW0-1"/>
    <property type="nucleotide sequence ID" value="NM_001288665.1"/>
</dbReference>
<dbReference type="RefSeq" id="NP_001275595.1">
    <molecule id="Q9NWW0-2"/>
    <property type="nucleotide sequence ID" value="NM_001288666.1"/>
</dbReference>
<dbReference type="RefSeq" id="NP_001275596.1">
    <property type="nucleotide sequence ID" value="NM_001288667.1"/>
</dbReference>
<dbReference type="RefSeq" id="NP_001275597.1">
    <property type="nucleotide sequence ID" value="NM_001288668.1"/>
</dbReference>
<dbReference type="RefSeq" id="NP_060355.1">
    <molecule id="Q9NWW0-1"/>
    <property type="nucleotide sequence ID" value="NM_017885.4"/>
</dbReference>
<dbReference type="BioGRID" id="120320">
    <property type="interactions" value="3"/>
</dbReference>
<dbReference type="ELM" id="Q9NWW0"/>
<dbReference type="FunCoup" id="Q9NWW0">
    <property type="interactions" value="352"/>
</dbReference>
<dbReference type="IntAct" id="Q9NWW0">
    <property type="interactions" value="3"/>
</dbReference>
<dbReference type="STRING" id="9606.ENSP00000248089"/>
<dbReference type="GlyGen" id="Q9NWW0">
    <property type="glycosylation" value="2 sites, 1 O-linked glycan (1 site)"/>
</dbReference>
<dbReference type="iPTMnet" id="Q9NWW0"/>
<dbReference type="PhosphoSitePlus" id="Q9NWW0"/>
<dbReference type="BioMuta" id="HCFC1R1"/>
<dbReference type="MassIVE" id="Q9NWW0"/>
<dbReference type="PaxDb" id="9606-ENSP00000248089"/>
<dbReference type="PeptideAtlas" id="Q9NWW0"/>
<dbReference type="Pumba" id="Q9NWW0"/>
<dbReference type="Antibodypedia" id="42633">
    <property type="antibodies" value="96 antibodies from 14 providers"/>
</dbReference>
<dbReference type="DNASU" id="54985"/>
<dbReference type="Ensembl" id="ENST00000248089.8">
    <molecule id="Q9NWW0-1"/>
    <property type="protein sequence ID" value="ENSP00000248089.4"/>
    <property type="gene ID" value="ENSG00000103145.11"/>
</dbReference>
<dbReference type="Ensembl" id="ENST00000574151.5">
    <molecule id="Q9NWW0-2"/>
    <property type="protein sequence ID" value="ENSP00000459178.1"/>
    <property type="gene ID" value="ENSG00000103145.11"/>
</dbReference>
<dbReference type="Ensembl" id="ENST00000574980.5">
    <molecule id="Q9NWW0-1"/>
    <property type="protein sequence ID" value="ENSP00000460639.1"/>
    <property type="gene ID" value="ENSG00000103145.11"/>
</dbReference>
<dbReference type="GeneID" id="54985"/>
<dbReference type="KEGG" id="hsa:54985"/>
<dbReference type="MANE-Select" id="ENST00000248089.8">
    <property type="protein sequence ID" value="ENSP00000248089.4"/>
    <property type="RefSeq nucleotide sequence ID" value="NM_017885.4"/>
    <property type="RefSeq protein sequence ID" value="NP_060355.1"/>
</dbReference>
<dbReference type="UCSC" id="uc002csy.3">
    <molecule id="Q9NWW0-1"/>
    <property type="organism name" value="human"/>
</dbReference>
<dbReference type="AGR" id="HGNC:21198"/>
<dbReference type="CTD" id="54985"/>
<dbReference type="DisGeNET" id="54985"/>
<dbReference type="GeneCards" id="HCFC1R1"/>
<dbReference type="HGNC" id="HGNC:21198">
    <property type="gene designation" value="HCFC1R1"/>
</dbReference>
<dbReference type="HPA" id="ENSG00000103145">
    <property type="expression patterns" value="Tissue enhanced (skeletal)"/>
</dbReference>
<dbReference type="MIM" id="618818">
    <property type="type" value="gene"/>
</dbReference>
<dbReference type="neXtProt" id="NX_Q9NWW0"/>
<dbReference type="OpenTargets" id="ENSG00000103145"/>
<dbReference type="PharmGKB" id="PA134951485"/>
<dbReference type="VEuPathDB" id="HostDB:ENSG00000103145"/>
<dbReference type="eggNOG" id="ENOG502SWHU">
    <property type="taxonomic scope" value="Eukaryota"/>
</dbReference>
<dbReference type="GeneTree" id="ENSGT00390000015785"/>
<dbReference type="InParanoid" id="Q9NWW0"/>
<dbReference type="OMA" id="EDNMATH"/>
<dbReference type="OrthoDB" id="9437224at2759"/>
<dbReference type="PAN-GO" id="Q9NWW0">
    <property type="GO annotations" value="0 GO annotations based on evolutionary models"/>
</dbReference>
<dbReference type="PhylomeDB" id="Q9NWW0"/>
<dbReference type="TreeFam" id="TF338381"/>
<dbReference type="PathwayCommons" id="Q9NWW0"/>
<dbReference type="SignaLink" id="Q9NWW0"/>
<dbReference type="BioGRID-ORCS" id="54985">
    <property type="hits" value="52 hits in 1155 CRISPR screens"/>
</dbReference>
<dbReference type="ChiTaRS" id="HCFC1R1">
    <property type="organism name" value="human"/>
</dbReference>
<dbReference type="GenomeRNAi" id="54985"/>
<dbReference type="Pharos" id="Q9NWW0">
    <property type="development level" value="Tbio"/>
</dbReference>
<dbReference type="PRO" id="PR:Q9NWW0"/>
<dbReference type="Proteomes" id="UP000005640">
    <property type="component" value="Chromosome 16"/>
</dbReference>
<dbReference type="RNAct" id="Q9NWW0">
    <property type="molecule type" value="protein"/>
</dbReference>
<dbReference type="Bgee" id="ENSG00000103145">
    <property type="expression patterns" value="Expressed in hindlimb stylopod muscle and 200 other cell types or tissues"/>
</dbReference>
<dbReference type="ExpressionAtlas" id="Q9NWW0">
    <property type="expression patterns" value="baseline and differential"/>
</dbReference>
<dbReference type="GO" id="GO:0005737">
    <property type="term" value="C:cytoplasm"/>
    <property type="evidence" value="ECO:0007669"/>
    <property type="project" value="UniProtKB-SubCell"/>
</dbReference>
<dbReference type="GO" id="GO:0005654">
    <property type="term" value="C:nucleoplasm"/>
    <property type="evidence" value="ECO:0000314"/>
    <property type="project" value="HPA"/>
</dbReference>
<dbReference type="InterPro" id="IPR029195">
    <property type="entry name" value="HCFC1R1"/>
</dbReference>
<dbReference type="PANTHER" id="PTHR16246">
    <property type="entry name" value="HOST CELL FACTOR C1 REGULATOR 1"/>
    <property type="match status" value="1"/>
</dbReference>
<dbReference type="PANTHER" id="PTHR16246:SF2">
    <property type="entry name" value="HOST CELL FACTOR C1 REGULATOR 1"/>
    <property type="match status" value="1"/>
</dbReference>
<dbReference type="Pfam" id="PF15226">
    <property type="entry name" value="HPIP"/>
    <property type="match status" value="1"/>
</dbReference>